<comment type="function">
    <text evidence="1">ATP-dependent specificity component of the Clp protease. It directs the protease to specific substrates. Can perform chaperone functions in the absence of ClpP.</text>
</comment>
<comment type="subunit">
    <text evidence="1">Component of the ClpX-ClpP complex. Forms a hexameric ring that, in the presence of ATP, binds to fourteen ClpP subunits assembled into a disk-like structure with a central cavity, resembling the structure of eukaryotic proteasomes.</text>
</comment>
<comment type="similarity">
    <text evidence="1">Belongs to the ClpX chaperone family.</text>
</comment>
<organism>
    <name type="scientific">Corynebacterium glutamicum (strain ATCC 13032 / DSM 20300 / JCM 1318 / BCRC 11384 / CCUG 27702 / LMG 3730 / NBRC 12168 / NCIMB 10025 / NRRL B-2784 / 534)</name>
    <dbReference type="NCBI Taxonomy" id="196627"/>
    <lineage>
        <taxon>Bacteria</taxon>
        <taxon>Bacillati</taxon>
        <taxon>Actinomycetota</taxon>
        <taxon>Actinomycetes</taxon>
        <taxon>Mycobacteriales</taxon>
        <taxon>Corynebacteriaceae</taxon>
        <taxon>Corynebacterium</taxon>
    </lineage>
</organism>
<keyword id="KW-0067">ATP-binding</keyword>
<keyword id="KW-0143">Chaperone</keyword>
<keyword id="KW-0479">Metal-binding</keyword>
<keyword id="KW-0547">Nucleotide-binding</keyword>
<keyword id="KW-1185">Reference proteome</keyword>
<keyword id="KW-0862">Zinc</keyword>
<reference key="1">
    <citation type="journal article" date="2003" name="Appl. Microbiol. Biotechnol.">
        <title>The Corynebacterium glutamicum genome: features and impacts on biotechnological processes.</title>
        <authorList>
            <person name="Ikeda M."/>
            <person name="Nakagawa S."/>
        </authorList>
    </citation>
    <scope>NUCLEOTIDE SEQUENCE [LARGE SCALE GENOMIC DNA]</scope>
    <source>
        <strain>ATCC 13032 / DSM 20300 / JCM 1318 / BCRC 11384 / CCUG 27702 / LMG 3730 / NBRC 12168 / NCIMB 10025 / NRRL B-2784 / 534</strain>
    </source>
</reference>
<reference key="2">
    <citation type="journal article" date="2003" name="J. Biotechnol.">
        <title>The complete Corynebacterium glutamicum ATCC 13032 genome sequence and its impact on the production of L-aspartate-derived amino acids and vitamins.</title>
        <authorList>
            <person name="Kalinowski J."/>
            <person name="Bathe B."/>
            <person name="Bartels D."/>
            <person name="Bischoff N."/>
            <person name="Bott M."/>
            <person name="Burkovski A."/>
            <person name="Dusch N."/>
            <person name="Eggeling L."/>
            <person name="Eikmanns B.J."/>
            <person name="Gaigalat L."/>
            <person name="Goesmann A."/>
            <person name="Hartmann M."/>
            <person name="Huthmacher K."/>
            <person name="Kraemer R."/>
            <person name="Linke B."/>
            <person name="McHardy A.C."/>
            <person name="Meyer F."/>
            <person name="Moeckel B."/>
            <person name="Pfefferle W."/>
            <person name="Puehler A."/>
            <person name="Rey D.A."/>
            <person name="Rueckert C."/>
            <person name="Rupp O."/>
            <person name="Sahm H."/>
            <person name="Wendisch V.F."/>
            <person name="Wiegraebe I."/>
            <person name="Tauch A."/>
        </authorList>
    </citation>
    <scope>NUCLEOTIDE SEQUENCE [LARGE SCALE GENOMIC DNA]</scope>
    <source>
        <strain>ATCC 13032 / DSM 20300 / JCM 1318 / BCRC 11384 / CCUG 27702 / LMG 3730 / NBRC 12168 / NCIMB 10025 / NRRL B-2784 / 534</strain>
    </source>
</reference>
<gene>
    <name evidence="1" type="primary">clpX</name>
    <name type="ordered locus">Cgl2387</name>
    <name type="ordered locus">cg2620</name>
</gene>
<proteinExistence type="inferred from homology"/>
<accession>Q8NN26</accession>
<feature type="chain" id="PRO_0000160347" description="ATP-dependent Clp protease ATP-binding subunit ClpX">
    <location>
        <begin position="1"/>
        <end position="426"/>
    </location>
</feature>
<feature type="domain" description="ClpX-type ZB" evidence="2">
    <location>
        <begin position="1"/>
        <end position="54"/>
    </location>
</feature>
<feature type="binding site" evidence="2">
    <location>
        <position position="13"/>
    </location>
    <ligand>
        <name>Zn(2+)</name>
        <dbReference type="ChEBI" id="CHEBI:29105"/>
    </ligand>
</feature>
<feature type="binding site" evidence="2">
    <location>
        <position position="16"/>
    </location>
    <ligand>
        <name>Zn(2+)</name>
        <dbReference type="ChEBI" id="CHEBI:29105"/>
    </ligand>
</feature>
<feature type="binding site" evidence="2">
    <location>
        <position position="35"/>
    </location>
    <ligand>
        <name>Zn(2+)</name>
        <dbReference type="ChEBI" id="CHEBI:29105"/>
    </ligand>
</feature>
<feature type="binding site" evidence="2">
    <location>
        <position position="38"/>
    </location>
    <ligand>
        <name>Zn(2+)</name>
        <dbReference type="ChEBI" id="CHEBI:29105"/>
    </ligand>
</feature>
<feature type="binding site" evidence="1">
    <location>
        <begin position="126"/>
        <end position="133"/>
    </location>
    <ligand>
        <name>ATP</name>
        <dbReference type="ChEBI" id="CHEBI:30616"/>
    </ligand>
</feature>
<sequence>MARMQESADLLKCSFCGKSQKQVKKLIAGGAVYICDECIELCNEIIEEELGQAQHDEQERNELPKPSEISAFLDTYVIGQDPAKRILSVAVYNHYKRLRASETIGRRRNDEPETELVKSNILMLGPTGSGKTFLAQTLAKLLDVPFAIADATSLTEAGYVGEDVENILLKLLQAADFDVERAQRGIIYIDEVDKISRKSENPSITRDVSGEGVQQALLKILEGTVAAIPPQGGRKHPNQDFIQLDTTNILFIVAGAFSGLEKVIADRNGKKGLGFGVEVSSKKEEANIVDIFKDVLPEDLVKFGLIPEFIGRLPVVATVSNLDQKSLVKVLTEPRNSLVKQYRRLFEMDDAVLTFTDDALEEIANQALERKTGARGLRAIMEEILVPIMYDLPDRKDVGEVIINGAVARGEAEPEMLEAVAEEKTA</sequence>
<evidence type="ECO:0000255" key="1">
    <source>
        <dbReference type="HAMAP-Rule" id="MF_00175"/>
    </source>
</evidence>
<evidence type="ECO:0000255" key="2">
    <source>
        <dbReference type="PROSITE-ProRule" id="PRU01250"/>
    </source>
</evidence>
<dbReference type="EMBL" id="BA000036">
    <property type="protein sequence ID" value="BAB99780.1"/>
    <property type="molecule type" value="Genomic_DNA"/>
</dbReference>
<dbReference type="EMBL" id="BX927155">
    <property type="protein sequence ID" value="CAF21052.1"/>
    <property type="molecule type" value="Genomic_DNA"/>
</dbReference>
<dbReference type="RefSeq" id="NP_601588.1">
    <property type="nucleotide sequence ID" value="NC_003450.3"/>
</dbReference>
<dbReference type="RefSeq" id="WP_011015085.1">
    <property type="nucleotide sequence ID" value="NC_006958.1"/>
</dbReference>
<dbReference type="SMR" id="Q8NN26"/>
<dbReference type="STRING" id="196627.cg2620"/>
<dbReference type="GeneID" id="1020337"/>
<dbReference type="KEGG" id="cgb:cg2620"/>
<dbReference type="KEGG" id="cgl:Cgl2387"/>
<dbReference type="PATRIC" id="fig|196627.13.peg.2322"/>
<dbReference type="eggNOG" id="COG1219">
    <property type="taxonomic scope" value="Bacteria"/>
</dbReference>
<dbReference type="HOGENOM" id="CLU_014218_8_2_11"/>
<dbReference type="OrthoDB" id="9804062at2"/>
<dbReference type="BioCyc" id="CORYNE:G18NG-11984-MONOMER"/>
<dbReference type="Proteomes" id="UP000000582">
    <property type="component" value="Chromosome"/>
</dbReference>
<dbReference type="Proteomes" id="UP000001009">
    <property type="component" value="Chromosome"/>
</dbReference>
<dbReference type="GO" id="GO:0009376">
    <property type="term" value="C:HslUV protease complex"/>
    <property type="evidence" value="ECO:0007669"/>
    <property type="project" value="TreeGrafter"/>
</dbReference>
<dbReference type="GO" id="GO:0005524">
    <property type="term" value="F:ATP binding"/>
    <property type="evidence" value="ECO:0007669"/>
    <property type="project" value="UniProtKB-UniRule"/>
</dbReference>
<dbReference type="GO" id="GO:0016887">
    <property type="term" value="F:ATP hydrolysis activity"/>
    <property type="evidence" value="ECO:0007669"/>
    <property type="project" value="InterPro"/>
</dbReference>
<dbReference type="GO" id="GO:0140662">
    <property type="term" value="F:ATP-dependent protein folding chaperone"/>
    <property type="evidence" value="ECO:0007669"/>
    <property type="project" value="InterPro"/>
</dbReference>
<dbReference type="GO" id="GO:0046983">
    <property type="term" value="F:protein dimerization activity"/>
    <property type="evidence" value="ECO:0007669"/>
    <property type="project" value="InterPro"/>
</dbReference>
<dbReference type="GO" id="GO:0051082">
    <property type="term" value="F:unfolded protein binding"/>
    <property type="evidence" value="ECO:0007669"/>
    <property type="project" value="UniProtKB-UniRule"/>
</dbReference>
<dbReference type="GO" id="GO:0008270">
    <property type="term" value="F:zinc ion binding"/>
    <property type="evidence" value="ECO:0007669"/>
    <property type="project" value="InterPro"/>
</dbReference>
<dbReference type="GO" id="GO:0051301">
    <property type="term" value="P:cell division"/>
    <property type="evidence" value="ECO:0007669"/>
    <property type="project" value="TreeGrafter"/>
</dbReference>
<dbReference type="GO" id="GO:0051603">
    <property type="term" value="P:proteolysis involved in protein catabolic process"/>
    <property type="evidence" value="ECO:0007669"/>
    <property type="project" value="TreeGrafter"/>
</dbReference>
<dbReference type="CDD" id="cd19497">
    <property type="entry name" value="RecA-like_ClpX"/>
    <property type="match status" value="1"/>
</dbReference>
<dbReference type="FunFam" id="1.10.8.60:FF:000002">
    <property type="entry name" value="ATP-dependent Clp protease ATP-binding subunit ClpX"/>
    <property type="match status" value="1"/>
</dbReference>
<dbReference type="FunFam" id="3.40.50.300:FF:000005">
    <property type="entry name" value="ATP-dependent Clp protease ATP-binding subunit ClpX"/>
    <property type="match status" value="1"/>
</dbReference>
<dbReference type="Gene3D" id="1.10.8.60">
    <property type="match status" value="1"/>
</dbReference>
<dbReference type="Gene3D" id="6.20.220.10">
    <property type="entry name" value="ClpX chaperone, C4-type zinc finger domain"/>
    <property type="match status" value="1"/>
</dbReference>
<dbReference type="Gene3D" id="3.40.50.300">
    <property type="entry name" value="P-loop containing nucleotide triphosphate hydrolases"/>
    <property type="match status" value="1"/>
</dbReference>
<dbReference type="HAMAP" id="MF_00175">
    <property type="entry name" value="ClpX"/>
    <property type="match status" value="1"/>
</dbReference>
<dbReference type="InterPro" id="IPR003593">
    <property type="entry name" value="AAA+_ATPase"/>
</dbReference>
<dbReference type="InterPro" id="IPR050052">
    <property type="entry name" value="ATP-dep_Clp_protease_ClpX"/>
</dbReference>
<dbReference type="InterPro" id="IPR003959">
    <property type="entry name" value="ATPase_AAA_core"/>
</dbReference>
<dbReference type="InterPro" id="IPR019489">
    <property type="entry name" value="Clp_ATPase_C"/>
</dbReference>
<dbReference type="InterPro" id="IPR004487">
    <property type="entry name" value="Clp_protease_ATP-bd_su_ClpX"/>
</dbReference>
<dbReference type="InterPro" id="IPR046425">
    <property type="entry name" value="ClpX_bact"/>
</dbReference>
<dbReference type="InterPro" id="IPR027417">
    <property type="entry name" value="P-loop_NTPase"/>
</dbReference>
<dbReference type="InterPro" id="IPR010603">
    <property type="entry name" value="Znf_CppX_C4"/>
</dbReference>
<dbReference type="InterPro" id="IPR038366">
    <property type="entry name" value="Znf_CppX_C4_sf"/>
</dbReference>
<dbReference type="NCBIfam" id="TIGR00382">
    <property type="entry name" value="clpX"/>
    <property type="match status" value="1"/>
</dbReference>
<dbReference type="NCBIfam" id="NF003745">
    <property type="entry name" value="PRK05342.1"/>
    <property type="match status" value="1"/>
</dbReference>
<dbReference type="PANTHER" id="PTHR48102:SF7">
    <property type="entry name" value="ATP-DEPENDENT CLP PROTEASE ATP-BINDING SUBUNIT CLPX-LIKE, MITOCHONDRIAL"/>
    <property type="match status" value="1"/>
</dbReference>
<dbReference type="PANTHER" id="PTHR48102">
    <property type="entry name" value="ATP-DEPENDENT CLP PROTEASE ATP-BINDING SUBUNIT CLPX-LIKE, MITOCHONDRIAL-RELATED"/>
    <property type="match status" value="1"/>
</dbReference>
<dbReference type="Pfam" id="PF07724">
    <property type="entry name" value="AAA_2"/>
    <property type="match status" value="1"/>
</dbReference>
<dbReference type="Pfam" id="PF10431">
    <property type="entry name" value="ClpB_D2-small"/>
    <property type="match status" value="1"/>
</dbReference>
<dbReference type="Pfam" id="PF06689">
    <property type="entry name" value="zf-C4_ClpX"/>
    <property type="match status" value="1"/>
</dbReference>
<dbReference type="SMART" id="SM00382">
    <property type="entry name" value="AAA"/>
    <property type="match status" value="1"/>
</dbReference>
<dbReference type="SMART" id="SM01086">
    <property type="entry name" value="ClpB_D2-small"/>
    <property type="match status" value="1"/>
</dbReference>
<dbReference type="SMART" id="SM00994">
    <property type="entry name" value="zf-C4_ClpX"/>
    <property type="match status" value="1"/>
</dbReference>
<dbReference type="SUPFAM" id="SSF57716">
    <property type="entry name" value="Glucocorticoid receptor-like (DNA-binding domain)"/>
    <property type="match status" value="1"/>
</dbReference>
<dbReference type="SUPFAM" id="SSF52540">
    <property type="entry name" value="P-loop containing nucleoside triphosphate hydrolases"/>
    <property type="match status" value="1"/>
</dbReference>
<dbReference type="PROSITE" id="PS51902">
    <property type="entry name" value="CLPX_ZB"/>
    <property type="match status" value="1"/>
</dbReference>
<protein>
    <recommendedName>
        <fullName evidence="1">ATP-dependent Clp protease ATP-binding subunit ClpX</fullName>
    </recommendedName>
</protein>
<name>CLPX_CORGL</name>